<reference key="1">
    <citation type="journal article" date="2009" name="J. Bacteriol.">
        <title>Complete genome sequence of Rhodobacter sphaeroides KD131.</title>
        <authorList>
            <person name="Lim S.-K."/>
            <person name="Kim S.J."/>
            <person name="Cha S.H."/>
            <person name="Oh Y.-K."/>
            <person name="Rhee H.-J."/>
            <person name="Kim M.-S."/>
            <person name="Lee J.K."/>
        </authorList>
    </citation>
    <scope>NUCLEOTIDE SEQUENCE [LARGE SCALE GENOMIC DNA]</scope>
    <source>
        <strain>KD131 / KCTC 12085</strain>
    </source>
</reference>
<organism>
    <name type="scientific">Cereibacter sphaeroides (strain KD131 / KCTC 12085)</name>
    <name type="common">Rhodobacter sphaeroides</name>
    <dbReference type="NCBI Taxonomy" id="557760"/>
    <lineage>
        <taxon>Bacteria</taxon>
        <taxon>Pseudomonadati</taxon>
        <taxon>Pseudomonadota</taxon>
        <taxon>Alphaproteobacteria</taxon>
        <taxon>Rhodobacterales</taxon>
        <taxon>Paracoccaceae</taxon>
        <taxon>Cereibacter</taxon>
    </lineage>
</organism>
<gene>
    <name evidence="1" type="primary">ruvB</name>
    <name type="ordered locus">RSKD131_1891</name>
</gene>
<keyword id="KW-0067">ATP-binding</keyword>
<keyword id="KW-0963">Cytoplasm</keyword>
<keyword id="KW-0227">DNA damage</keyword>
<keyword id="KW-0233">DNA recombination</keyword>
<keyword id="KW-0234">DNA repair</keyword>
<keyword id="KW-0238">DNA-binding</keyword>
<keyword id="KW-0378">Hydrolase</keyword>
<keyword id="KW-0547">Nucleotide-binding</keyword>
<protein>
    <recommendedName>
        <fullName evidence="1">Holliday junction branch migration complex subunit RuvB</fullName>
        <ecNumber evidence="1">3.6.4.-</ecNumber>
    </recommendedName>
</protein>
<name>RUVB_CERSK</name>
<sequence length="341" mass="37460">MTSSDPTLRPERLPEDMDRALRPQSLEEFVGQAEARANLRVFIESARMRGEAMDHTLFHGPPGLGKTTLAQIMARELGVGFRMTSGPVLAKPGDLAAILTNLEPRDVLFIDEIHRLSPVVEEVLYPALEDFALDLVIGEGPAARTVRIDLQPFTLVGATTRLGLLTTPLRDRFGIPTRLQFYTEDELDLIVARGARMMGVDSDPEGTREIARRARGTPRIAGRLLRRVVDFALVEGDGRLTQAIADRALTRLGVDHLGLDLGDRRYIGLIAENYGGGPVGIETIAAALSESRDAVEEVIEPYLLQQGLIQRTPRGRMLAHKAWRHMGIEPPKGPGQSDLFG</sequence>
<evidence type="ECO:0000255" key="1">
    <source>
        <dbReference type="HAMAP-Rule" id="MF_00016"/>
    </source>
</evidence>
<feature type="chain" id="PRO_1000116653" description="Holliday junction branch migration complex subunit RuvB">
    <location>
        <begin position="1"/>
        <end position="341"/>
    </location>
</feature>
<feature type="region of interest" description="Large ATPase domain (RuvB-L)" evidence="1">
    <location>
        <begin position="1"/>
        <end position="182"/>
    </location>
</feature>
<feature type="region of interest" description="Small ATPAse domain (RuvB-S)" evidence="1">
    <location>
        <begin position="183"/>
        <end position="253"/>
    </location>
</feature>
<feature type="region of interest" description="Head domain (RuvB-H)" evidence="1">
    <location>
        <begin position="256"/>
        <end position="341"/>
    </location>
</feature>
<feature type="binding site" evidence="1">
    <location>
        <position position="21"/>
    </location>
    <ligand>
        <name>ATP</name>
        <dbReference type="ChEBI" id="CHEBI:30616"/>
    </ligand>
</feature>
<feature type="binding site" evidence="1">
    <location>
        <position position="22"/>
    </location>
    <ligand>
        <name>ATP</name>
        <dbReference type="ChEBI" id="CHEBI:30616"/>
    </ligand>
</feature>
<feature type="binding site" evidence="1">
    <location>
        <position position="63"/>
    </location>
    <ligand>
        <name>ATP</name>
        <dbReference type="ChEBI" id="CHEBI:30616"/>
    </ligand>
</feature>
<feature type="binding site" evidence="1">
    <location>
        <position position="66"/>
    </location>
    <ligand>
        <name>ATP</name>
        <dbReference type="ChEBI" id="CHEBI:30616"/>
    </ligand>
</feature>
<feature type="binding site" evidence="1">
    <location>
        <position position="67"/>
    </location>
    <ligand>
        <name>ATP</name>
        <dbReference type="ChEBI" id="CHEBI:30616"/>
    </ligand>
</feature>
<feature type="binding site" evidence="1">
    <location>
        <position position="67"/>
    </location>
    <ligand>
        <name>Mg(2+)</name>
        <dbReference type="ChEBI" id="CHEBI:18420"/>
    </ligand>
</feature>
<feature type="binding site" evidence="1">
    <location>
        <position position="68"/>
    </location>
    <ligand>
        <name>ATP</name>
        <dbReference type="ChEBI" id="CHEBI:30616"/>
    </ligand>
</feature>
<feature type="binding site" evidence="1">
    <location>
        <begin position="129"/>
        <end position="131"/>
    </location>
    <ligand>
        <name>ATP</name>
        <dbReference type="ChEBI" id="CHEBI:30616"/>
    </ligand>
</feature>
<feature type="binding site" evidence="1">
    <location>
        <position position="172"/>
    </location>
    <ligand>
        <name>ATP</name>
        <dbReference type="ChEBI" id="CHEBI:30616"/>
    </ligand>
</feature>
<feature type="binding site" evidence="1">
    <location>
        <position position="182"/>
    </location>
    <ligand>
        <name>ATP</name>
        <dbReference type="ChEBI" id="CHEBI:30616"/>
    </ligand>
</feature>
<feature type="binding site" evidence="1">
    <location>
        <position position="219"/>
    </location>
    <ligand>
        <name>ATP</name>
        <dbReference type="ChEBI" id="CHEBI:30616"/>
    </ligand>
</feature>
<feature type="binding site" evidence="1">
    <location>
        <position position="292"/>
    </location>
    <ligand>
        <name>DNA</name>
        <dbReference type="ChEBI" id="CHEBI:16991"/>
    </ligand>
</feature>
<feature type="binding site" evidence="1">
    <location>
        <position position="311"/>
    </location>
    <ligand>
        <name>DNA</name>
        <dbReference type="ChEBI" id="CHEBI:16991"/>
    </ligand>
</feature>
<feature type="binding site" evidence="1">
    <location>
        <position position="316"/>
    </location>
    <ligand>
        <name>DNA</name>
        <dbReference type="ChEBI" id="CHEBI:16991"/>
    </ligand>
</feature>
<dbReference type="EC" id="3.6.4.-" evidence="1"/>
<dbReference type="EMBL" id="CP001150">
    <property type="protein sequence ID" value="ACM01751.1"/>
    <property type="molecule type" value="Genomic_DNA"/>
</dbReference>
<dbReference type="RefSeq" id="WP_011338313.1">
    <property type="nucleotide sequence ID" value="NC_011963.1"/>
</dbReference>
<dbReference type="SMR" id="B9KKV4"/>
<dbReference type="GeneID" id="67447287"/>
<dbReference type="KEGG" id="rsk:RSKD131_1891"/>
<dbReference type="HOGENOM" id="CLU_055599_1_0_5"/>
<dbReference type="GO" id="GO:0005737">
    <property type="term" value="C:cytoplasm"/>
    <property type="evidence" value="ECO:0007669"/>
    <property type="project" value="UniProtKB-SubCell"/>
</dbReference>
<dbReference type="GO" id="GO:0048476">
    <property type="term" value="C:Holliday junction resolvase complex"/>
    <property type="evidence" value="ECO:0007669"/>
    <property type="project" value="UniProtKB-UniRule"/>
</dbReference>
<dbReference type="GO" id="GO:0005524">
    <property type="term" value="F:ATP binding"/>
    <property type="evidence" value="ECO:0007669"/>
    <property type="project" value="UniProtKB-UniRule"/>
</dbReference>
<dbReference type="GO" id="GO:0016887">
    <property type="term" value="F:ATP hydrolysis activity"/>
    <property type="evidence" value="ECO:0007669"/>
    <property type="project" value="InterPro"/>
</dbReference>
<dbReference type="GO" id="GO:0000400">
    <property type="term" value="F:four-way junction DNA binding"/>
    <property type="evidence" value="ECO:0007669"/>
    <property type="project" value="UniProtKB-UniRule"/>
</dbReference>
<dbReference type="GO" id="GO:0009378">
    <property type="term" value="F:four-way junction helicase activity"/>
    <property type="evidence" value="ECO:0007669"/>
    <property type="project" value="InterPro"/>
</dbReference>
<dbReference type="GO" id="GO:0006310">
    <property type="term" value="P:DNA recombination"/>
    <property type="evidence" value="ECO:0007669"/>
    <property type="project" value="UniProtKB-UniRule"/>
</dbReference>
<dbReference type="GO" id="GO:0006281">
    <property type="term" value="P:DNA repair"/>
    <property type="evidence" value="ECO:0007669"/>
    <property type="project" value="UniProtKB-UniRule"/>
</dbReference>
<dbReference type="CDD" id="cd00009">
    <property type="entry name" value="AAA"/>
    <property type="match status" value="1"/>
</dbReference>
<dbReference type="Gene3D" id="1.10.8.60">
    <property type="match status" value="1"/>
</dbReference>
<dbReference type="Gene3D" id="3.40.50.300">
    <property type="entry name" value="P-loop containing nucleotide triphosphate hydrolases"/>
    <property type="match status" value="1"/>
</dbReference>
<dbReference type="Gene3D" id="1.10.10.10">
    <property type="entry name" value="Winged helix-like DNA-binding domain superfamily/Winged helix DNA-binding domain"/>
    <property type="match status" value="1"/>
</dbReference>
<dbReference type="HAMAP" id="MF_00016">
    <property type="entry name" value="DNA_HJ_migration_RuvB"/>
    <property type="match status" value="1"/>
</dbReference>
<dbReference type="InterPro" id="IPR003593">
    <property type="entry name" value="AAA+_ATPase"/>
</dbReference>
<dbReference type="InterPro" id="IPR041445">
    <property type="entry name" value="AAA_lid_4"/>
</dbReference>
<dbReference type="InterPro" id="IPR004605">
    <property type="entry name" value="DNA_helicase_Holl-junc_RuvB"/>
</dbReference>
<dbReference type="InterPro" id="IPR027417">
    <property type="entry name" value="P-loop_NTPase"/>
</dbReference>
<dbReference type="InterPro" id="IPR008824">
    <property type="entry name" value="RuvB-like_N"/>
</dbReference>
<dbReference type="InterPro" id="IPR008823">
    <property type="entry name" value="RuvB_C"/>
</dbReference>
<dbReference type="InterPro" id="IPR036388">
    <property type="entry name" value="WH-like_DNA-bd_sf"/>
</dbReference>
<dbReference type="InterPro" id="IPR036390">
    <property type="entry name" value="WH_DNA-bd_sf"/>
</dbReference>
<dbReference type="NCBIfam" id="NF000868">
    <property type="entry name" value="PRK00080.1"/>
    <property type="match status" value="1"/>
</dbReference>
<dbReference type="NCBIfam" id="TIGR00635">
    <property type="entry name" value="ruvB"/>
    <property type="match status" value="1"/>
</dbReference>
<dbReference type="PANTHER" id="PTHR42848">
    <property type="match status" value="1"/>
</dbReference>
<dbReference type="PANTHER" id="PTHR42848:SF1">
    <property type="entry name" value="HOLLIDAY JUNCTION BRANCH MIGRATION COMPLEX SUBUNIT RUVB"/>
    <property type="match status" value="1"/>
</dbReference>
<dbReference type="Pfam" id="PF17864">
    <property type="entry name" value="AAA_lid_4"/>
    <property type="match status" value="1"/>
</dbReference>
<dbReference type="Pfam" id="PF05491">
    <property type="entry name" value="RuvB_C"/>
    <property type="match status" value="1"/>
</dbReference>
<dbReference type="Pfam" id="PF05496">
    <property type="entry name" value="RuvB_N"/>
    <property type="match status" value="1"/>
</dbReference>
<dbReference type="SMART" id="SM00382">
    <property type="entry name" value="AAA"/>
    <property type="match status" value="1"/>
</dbReference>
<dbReference type="SUPFAM" id="SSF52540">
    <property type="entry name" value="P-loop containing nucleoside triphosphate hydrolases"/>
    <property type="match status" value="1"/>
</dbReference>
<dbReference type="SUPFAM" id="SSF46785">
    <property type="entry name" value="Winged helix' DNA-binding domain"/>
    <property type="match status" value="1"/>
</dbReference>
<comment type="function">
    <text evidence="1">The RuvA-RuvB-RuvC complex processes Holliday junction (HJ) DNA during genetic recombination and DNA repair, while the RuvA-RuvB complex plays an important role in the rescue of blocked DNA replication forks via replication fork reversal (RFR). RuvA specifically binds to HJ cruciform DNA, conferring on it an open structure. The RuvB hexamer acts as an ATP-dependent pump, pulling dsDNA into and through the RuvAB complex. RuvB forms 2 homohexamers on either side of HJ DNA bound by 1 or 2 RuvA tetramers; 4 subunits per hexamer contact DNA at a time. Coordinated motions by a converter formed by DNA-disengaged RuvB subunits stimulates ATP hydrolysis and nucleotide exchange. Immobilization of the converter enables RuvB to convert the ATP-contained energy into a lever motion, pulling 2 nucleotides of DNA out of the RuvA tetramer per ATP hydrolyzed, thus driving DNA branch migration. The RuvB motors rotate together with the DNA substrate, which together with the progressing nucleotide cycle form the mechanistic basis for DNA recombination by continuous HJ branch migration. Branch migration allows RuvC to scan DNA until it finds its consensus sequence, where it cleaves and resolves cruciform DNA.</text>
</comment>
<comment type="catalytic activity">
    <reaction evidence="1">
        <text>ATP + H2O = ADP + phosphate + H(+)</text>
        <dbReference type="Rhea" id="RHEA:13065"/>
        <dbReference type="ChEBI" id="CHEBI:15377"/>
        <dbReference type="ChEBI" id="CHEBI:15378"/>
        <dbReference type="ChEBI" id="CHEBI:30616"/>
        <dbReference type="ChEBI" id="CHEBI:43474"/>
        <dbReference type="ChEBI" id="CHEBI:456216"/>
    </reaction>
</comment>
<comment type="subunit">
    <text evidence="1">Homohexamer. Forms an RuvA(8)-RuvB(12)-Holliday junction (HJ) complex. HJ DNA is sandwiched between 2 RuvA tetramers; dsDNA enters through RuvA and exits via RuvB. An RuvB hexamer assembles on each DNA strand where it exits the tetramer. Each RuvB hexamer is contacted by two RuvA subunits (via domain III) on 2 adjacent RuvB subunits; this complex drives branch migration. In the full resolvosome a probable DNA-RuvA(4)-RuvB(12)-RuvC(2) complex forms which resolves the HJ.</text>
</comment>
<comment type="subcellular location">
    <subcellularLocation>
        <location evidence="1">Cytoplasm</location>
    </subcellularLocation>
</comment>
<comment type="domain">
    <text evidence="1">Has 3 domains, the large (RuvB-L) and small ATPase (RuvB-S) domains and the C-terminal head (RuvB-H) domain. The head domain binds DNA, while the ATPase domains jointly bind ATP, ADP or are empty depending on the state of the subunit in the translocation cycle. During a single DNA translocation step the structure of each domain remains the same, but their relative positions change.</text>
</comment>
<comment type="similarity">
    <text evidence="1">Belongs to the RuvB family.</text>
</comment>
<proteinExistence type="inferred from homology"/>
<accession>B9KKV4</accession>